<dbReference type="EC" id="6.3.1.5" evidence="1"/>
<dbReference type="EMBL" id="CP000472">
    <property type="protein sequence ID" value="ACJ29011.1"/>
    <property type="molecule type" value="Genomic_DNA"/>
</dbReference>
<dbReference type="RefSeq" id="WP_020912371.1">
    <property type="nucleotide sequence ID" value="NC_011566.1"/>
</dbReference>
<dbReference type="SMR" id="B8CNP2"/>
<dbReference type="STRING" id="225849.swp_2264"/>
<dbReference type="KEGG" id="swp:swp_2264"/>
<dbReference type="eggNOG" id="COG0171">
    <property type="taxonomic scope" value="Bacteria"/>
</dbReference>
<dbReference type="HOGENOM" id="CLU_059327_3_0_6"/>
<dbReference type="OrthoDB" id="3266517at2"/>
<dbReference type="UniPathway" id="UPA00253">
    <property type="reaction ID" value="UER00333"/>
</dbReference>
<dbReference type="Proteomes" id="UP000000753">
    <property type="component" value="Chromosome"/>
</dbReference>
<dbReference type="GO" id="GO:0005737">
    <property type="term" value="C:cytoplasm"/>
    <property type="evidence" value="ECO:0007669"/>
    <property type="project" value="InterPro"/>
</dbReference>
<dbReference type="GO" id="GO:0005524">
    <property type="term" value="F:ATP binding"/>
    <property type="evidence" value="ECO:0007669"/>
    <property type="project" value="UniProtKB-UniRule"/>
</dbReference>
<dbReference type="GO" id="GO:0004359">
    <property type="term" value="F:glutaminase activity"/>
    <property type="evidence" value="ECO:0007669"/>
    <property type="project" value="InterPro"/>
</dbReference>
<dbReference type="GO" id="GO:0046872">
    <property type="term" value="F:metal ion binding"/>
    <property type="evidence" value="ECO:0007669"/>
    <property type="project" value="UniProtKB-KW"/>
</dbReference>
<dbReference type="GO" id="GO:0003952">
    <property type="term" value="F:NAD+ synthase (glutamine-hydrolyzing) activity"/>
    <property type="evidence" value="ECO:0007669"/>
    <property type="project" value="InterPro"/>
</dbReference>
<dbReference type="GO" id="GO:0008795">
    <property type="term" value="F:NAD+ synthase activity"/>
    <property type="evidence" value="ECO:0007669"/>
    <property type="project" value="UniProtKB-UniRule"/>
</dbReference>
<dbReference type="GO" id="GO:0009435">
    <property type="term" value="P:NAD biosynthetic process"/>
    <property type="evidence" value="ECO:0007669"/>
    <property type="project" value="UniProtKB-UniRule"/>
</dbReference>
<dbReference type="CDD" id="cd00553">
    <property type="entry name" value="NAD_synthase"/>
    <property type="match status" value="1"/>
</dbReference>
<dbReference type="FunFam" id="3.40.50.620:FF:000015">
    <property type="entry name" value="NH(3)-dependent NAD(+) synthetase"/>
    <property type="match status" value="1"/>
</dbReference>
<dbReference type="Gene3D" id="3.40.50.620">
    <property type="entry name" value="HUPs"/>
    <property type="match status" value="1"/>
</dbReference>
<dbReference type="HAMAP" id="MF_00193">
    <property type="entry name" value="NadE_ammonia_dep"/>
    <property type="match status" value="1"/>
</dbReference>
<dbReference type="InterPro" id="IPR022310">
    <property type="entry name" value="NAD/GMP_synthase"/>
</dbReference>
<dbReference type="InterPro" id="IPR003694">
    <property type="entry name" value="NAD_synthase"/>
</dbReference>
<dbReference type="InterPro" id="IPR022926">
    <property type="entry name" value="NH(3)-dep_NAD(+)_synth"/>
</dbReference>
<dbReference type="InterPro" id="IPR014729">
    <property type="entry name" value="Rossmann-like_a/b/a_fold"/>
</dbReference>
<dbReference type="NCBIfam" id="TIGR00552">
    <property type="entry name" value="nadE"/>
    <property type="match status" value="1"/>
</dbReference>
<dbReference type="NCBIfam" id="NF001979">
    <property type="entry name" value="PRK00768.1"/>
    <property type="match status" value="1"/>
</dbReference>
<dbReference type="PANTHER" id="PTHR23090">
    <property type="entry name" value="NH 3 /GLUTAMINE-DEPENDENT NAD + SYNTHETASE"/>
    <property type="match status" value="1"/>
</dbReference>
<dbReference type="PANTHER" id="PTHR23090:SF7">
    <property type="entry name" value="NH(3)-DEPENDENT NAD(+) SYNTHETASE"/>
    <property type="match status" value="1"/>
</dbReference>
<dbReference type="Pfam" id="PF02540">
    <property type="entry name" value="NAD_synthase"/>
    <property type="match status" value="1"/>
</dbReference>
<dbReference type="SUPFAM" id="SSF52402">
    <property type="entry name" value="Adenine nucleotide alpha hydrolases-like"/>
    <property type="match status" value="1"/>
</dbReference>
<feature type="chain" id="PRO_1000118625" description="NH(3)-dependent NAD(+) synthetase">
    <location>
        <begin position="1"/>
        <end position="276"/>
    </location>
</feature>
<feature type="binding site" evidence="1">
    <location>
        <begin position="43"/>
        <end position="50"/>
    </location>
    <ligand>
        <name>ATP</name>
        <dbReference type="ChEBI" id="CHEBI:30616"/>
    </ligand>
</feature>
<feature type="binding site" evidence="1">
    <location>
        <position position="49"/>
    </location>
    <ligand>
        <name>Mg(2+)</name>
        <dbReference type="ChEBI" id="CHEBI:18420"/>
    </ligand>
</feature>
<feature type="binding site" evidence="1">
    <location>
        <position position="146"/>
    </location>
    <ligand>
        <name>deamido-NAD(+)</name>
        <dbReference type="ChEBI" id="CHEBI:58437"/>
    </ligand>
</feature>
<feature type="binding site" evidence="1">
    <location>
        <position position="166"/>
    </location>
    <ligand>
        <name>ATP</name>
        <dbReference type="ChEBI" id="CHEBI:30616"/>
    </ligand>
</feature>
<feature type="binding site" evidence="1">
    <location>
        <position position="171"/>
    </location>
    <ligand>
        <name>Mg(2+)</name>
        <dbReference type="ChEBI" id="CHEBI:18420"/>
    </ligand>
</feature>
<feature type="binding site" evidence="1">
    <location>
        <position position="179"/>
    </location>
    <ligand>
        <name>deamido-NAD(+)</name>
        <dbReference type="ChEBI" id="CHEBI:58437"/>
    </ligand>
</feature>
<feature type="binding site" evidence="1">
    <location>
        <position position="186"/>
    </location>
    <ligand>
        <name>deamido-NAD(+)</name>
        <dbReference type="ChEBI" id="CHEBI:58437"/>
    </ligand>
</feature>
<feature type="binding site" evidence="1">
    <location>
        <position position="195"/>
    </location>
    <ligand>
        <name>ATP</name>
        <dbReference type="ChEBI" id="CHEBI:30616"/>
    </ligand>
</feature>
<feature type="binding site" evidence="1">
    <location>
        <position position="217"/>
    </location>
    <ligand>
        <name>ATP</name>
        <dbReference type="ChEBI" id="CHEBI:30616"/>
    </ligand>
</feature>
<feature type="binding site" evidence="1">
    <location>
        <begin position="266"/>
        <end position="267"/>
    </location>
    <ligand>
        <name>deamido-NAD(+)</name>
        <dbReference type="ChEBI" id="CHEBI:58437"/>
    </ligand>
</feature>
<organism>
    <name type="scientific">Shewanella piezotolerans (strain WP3 / JCM 13877)</name>
    <dbReference type="NCBI Taxonomy" id="225849"/>
    <lineage>
        <taxon>Bacteria</taxon>
        <taxon>Pseudomonadati</taxon>
        <taxon>Pseudomonadota</taxon>
        <taxon>Gammaproteobacteria</taxon>
        <taxon>Alteromonadales</taxon>
        <taxon>Shewanellaceae</taxon>
        <taxon>Shewanella</taxon>
    </lineage>
</organism>
<keyword id="KW-0067">ATP-binding</keyword>
<keyword id="KW-0436">Ligase</keyword>
<keyword id="KW-0460">Magnesium</keyword>
<keyword id="KW-0479">Metal-binding</keyword>
<keyword id="KW-0520">NAD</keyword>
<keyword id="KW-0547">Nucleotide-binding</keyword>
<accession>B8CNP2</accession>
<protein>
    <recommendedName>
        <fullName evidence="1">NH(3)-dependent NAD(+) synthetase</fullName>
        <ecNumber evidence="1">6.3.1.5</ecNumber>
    </recommendedName>
</protein>
<gene>
    <name evidence="1" type="primary">nadE</name>
    <name type="ordered locus">swp_2264</name>
</gene>
<evidence type="ECO:0000255" key="1">
    <source>
        <dbReference type="HAMAP-Rule" id="MF_00193"/>
    </source>
</evidence>
<proteinExistence type="inferred from homology"/>
<comment type="function">
    <text evidence="1">Catalyzes the ATP-dependent amidation of deamido-NAD to form NAD. Uses ammonia as a nitrogen source.</text>
</comment>
<comment type="catalytic activity">
    <reaction evidence="1">
        <text>deamido-NAD(+) + NH4(+) + ATP = AMP + diphosphate + NAD(+) + H(+)</text>
        <dbReference type="Rhea" id="RHEA:21188"/>
        <dbReference type="ChEBI" id="CHEBI:15378"/>
        <dbReference type="ChEBI" id="CHEBI:28938"/>
        <dbReference type="ChEBI" id="CHEBI:30616"/>
        <dbReference type="ChEBI" id="CHEBI:33019"/>
        <dbReference type="ChEBI" id="CHEBI:57540"/>
        <dbReference type="ChEBI" id="CHEBI:58437"/>
        <dbReference type="ChEBI" id="CHEBI:456215"/>
        <dbReference type="EC" id="6.3.1.5"/>
    </reaction>
</comment>
<comment type="pathway">
    <text evidence="1">Cofactor biosynthesis; NAD(+) biosynthesis; NAD(+) from deamido-NAD(+) (ammonia route): step 1/1.</text>
</comment>
<comment type="subunit">
    <text evidence="1">Homodimer.</text>
</comment>
<comment type="similarity">
    <text evidence="1">Belongs to the NAD synthetase family.</text>
</comment>
<reference key="1">
    <citation type="journal article" date="2008" name="PLoS ONE">
        <title>Environmental adaptation: genomic analysis of the piezotolerant and psychrotolerant deep-sea iron reducing bacterium Shewanella piezotolerans WP3.</title>
        <authorList>
            <person name="Wang F."/>
            <person name="Wang J."/>
            <person name="Jian H."/>
            <person name="Zhang B."/>
            <person name="Li S."/>
            <person name="Wang F."/>
            <person name="Zeng X."/>
            <person name="Gao L."/>
            <person name="Bartlett D.H."/>
            <person name="Yu J."/>
            <person name="Hu S."/>
            <person name="Xiao X."/>
        </authorList>
    </citation>
    <scope>NUCLEOTIDE SEQUENCE [LARGE SCALE GENOMIC DNA]</scope>
    <source>
        <strain>WP3 / JCM 13877</strain>
    </source>
</reference>
<name>NADE_SHEPW</name>
<sequence>MKGQILREMKVLNAIDPAFEVQRRVAFIKTKLKQSNTQSLVLGISGGVDSSLAGRLCQLAVDEINADTDGSGYQFIAVRLPYDIQKDEDEAQLACQFIKPSKQVTVNVKDGVNGIHSETLSAIEMAGIVLPDNTNIDFVKGNVKARMRMVAQYEIAGLVAGLVVGTDHSAENITGFYTKWGDGACDLAPLFGLNKRQVRTLAHFLGAPDILVNKAPTADLEEGQPQLEDEIALGLTYDQIDDFLEGKEVSEAVNDRLVSIYRATQHKRDAIPTIYD</sequence>